<keyword id="KW-0004">4Fe-4S</keyword>
<keyword id="KW-0963">Cytoplasm</keyword>
<keyword id="KW-0408">Iron</keyword>
<keyword id="KW-0411">Iron-sulfur</keyword>
<keyword id="KW-0479">Metal-binding</keyword>
<keyword id="KW-0949">S-adenosyl-L-methionine</keyword>
<keyword id="KW-0808">Transferase</keyword>
<keyword id="KW-0819">tRNA processing</keyword>
<dbReference type="EC" id="2.8.4.3" evidence="1"/>
<dbReference type="EMBL" id="CP001001">
    <property type="protein sequence ID" value="ACB22650.1"/>
    <property type="molecule type" value="Genomic_DNA"/>
</dbReference>
<dbReference type="RefSeq" id="WP_012317646.1">
    <property type="nucleotide sequence ID" value="NC_010505.1"/>
</dbReference>
<dbReference type="SMR" id="B1LWE8"/>
<dbReference type="STRING" id="426355.Mrad2831_0639"/>
<dbReference type="GeneID" id="6136653"/>
<dbReference type="KEGG" id="mrd:Mrad2831_0639"/>
<dbReference type="eggNOG" id="COG0621">
    <property type="taxonomic scope" value="Bacteria"/>
</dbReference>
<dbReference type="HOGENOM" id="CLU_018697_2_0_5"/>
<dbReference type="OrthoDB" id="9805215at2"/>
<dbReference type="Proteomes" id="UP000006589">
    <property type="component" value="Chromosome"/>
</dbReference>
<dbReference type="GO" id="GO:0005829">
    <property type="term" value="C:cytosol"/>
    <property type="evidence" value="ECO:0007669"/>
    <property type="project" value="TreeGrafter"/>
</dbReference>
<dbReference type="GO" id="GO:0051539">
    <property type="term" value="F:4 iron, 4 sulfur cluster binding"/>
    <property type="evidence" value="ECO:0007669"/>
    <property type="project" value="UniProtKB-UniRule"/>
</dbReference>
<dbReference type="GO" id="GO:0046872">
    <property type="term" value="F:metal ion binding"/>
    <property type="evidence" value="ECO:0007669"/>
    <property type="project" value="UniProtKB-KW"/>
</dbReference>
<dbReference type="GO" id="GO:0035597">
    <property type="term" value="F:N6-isopentenyladenosine methylthiotransferase activity"/>
    <property type="evidence" value="ECO:0007669"/>
    <property type="project" value="TreeGrafter"/>
</dbReference>
<dbReference type="CDD" id="cd01335">
    <property type="entry name" value="Radical_SAM"/>
    <property type="match status" value="1"/>
</dbReference>
<dbReference type="FunFam" id="3.40.50.12160:FF:000003">
    <property type="entry name" value="CDK5 regulatory subunit-associated protein 1"/>
    <property type="match status" value="1"/>
</dbReference>
<dbReference type="FunFam" id="3.80.30.20:FF:000001">
    <property type="entry name" value="tRNA-2-methylthio-N(6)-dimethylallyladenosine synthase 2"/>
    <property type="match status" value="1"/>
</dbReference>
<dbReference type="Gene3D" id="3.40.50.12160">
    <property type="entry name" value="Methylthiotransferase, N-terminal domain"/>
    <property type="match status" value="1"/>
</dbReference>
<dbReference type="Gene3D" id="3.80.30.20">
    <property type="entry name" value="tm_1862 like domain"/>
    <property type="match status" value="1"/>
</dbReference>
<dbReference type="HAMAP" id="MF_01864">
    <property type="entry name" value="tRNA_metthiotr_MiaB"/>
    <property type="match status" value="1"/>
</dbReference>
<dbReference type="InterPro" id="IPR006638">
    <property type="entry name" value="Elp3/MiaA/NifB-like_rSAM"/>
</dbReference>
<dbReference type="InterPro" id="IPR005839">
    <property type="entry name" value="Methylthiotransferase"/>
</dbReference>
<dbReference type="InterPro" id="IPR020612">
    <property type="entry name" value="Methylthiotransferase_CS"/>
</dbReference>
<dbReference type="InterPro" id="IPR013848">
    <property type="entry name" value="Methylthiotransferase_N"/>
</dbReference>
<dbReference type="InterPro" id="IPR038135">
    <property type="entry name" value="Methylthiotransferase_N_sf"/>
</dbReference>
<dbReference type="InterPro" id="IPR006463">
    <property type="entry name" value="MiaB_methiolase"/>
</dbReference>
<dbReference type="InterPro" id="IPR007197">
    <property type="entry name" value="rSAM"/>
</dbReference>
<dbReference type="InterPro" id="IPR023404">
    <property type="entry name" value="rSAM_horseshoe"/>
</dbReference>
<dbReference type="InterPro" id="IPR002792">
    <property type="entry name" value="TRAM_dom"/>
</dbReference>
<dbReference type="NCBIfam" id="TIGR01574">
    <property type="entry name" value="miaB-methiolase"/>
    <property type="match status" value="1"/>
</dbReference>
<dbReference type="NCBIfam" id="TIGR00089">
    <property type="entry name" value="MiaB/RimO family radical SAM methylthiotransferase"/>
    <property type="match status" value="1"/>
</dbReference>
<dbReference type="PANTHER" id="PTHR43020">
    <property type="entry name" value="CDK5 REGULATORY SUBUNIT-ASSOCIATED PROTEIN 1"/>
    <property type="match status" value="1"/>
</dbReference>
<dbReference type="PANTHER" id="PTHR43020:SF2">
    <property type="entry name" value="MITOCHONDRIAL TRNA METHYLTHIOTRANSFERASE CDK5RAP1"/>
    <property type="match status" value="1"/>
</dbReference>
<dbReference type="Pfam" id="PF04055">
    <property type="entry name" value="Radical_SAM"/>
    <property type="match status" value="1"/>
</dbReference>
<dbReference type="Pfam" id="PF01938">
    <property type="entry name" value="TRAM"/>
    <property type="match status" value="1"/>
</dbReference>
<dbReference type="Pfam" id="PF00919">
    <property type="entry name" value="UPF0004"/>
    <property type="match status" value="1"/>
</dbReference>
<dbReference type="SFLD" id="SFLDF00273">
    <property type="entry name" value="(dimethylallyl)adenosine_tRNA"/>
    <property type="match status" value="1"/>
</dbReference>
<dbReference type="SFLD" id="SFLDG01082">
    <property type="entry name" value="B12-binding_domain_containing"/>
    <property type="match status" value="1"/>
</dbReference>
<dbReference type="SFLD" id="SFLDG01061">
    <property type="entry name" value="methylthiotransferase"/>
    <property type="match status" value="1"/>
</dbReference>
<dbReference type="SMART" id="SM00729">
    <property type="entry name" value="Elp3"/>
    <property type="match status" value="1"/>
</dbReference>
<dbReference type="SUPFAM" id="SSF102114">
    <property type="entry name" value="Radical SAM enzymes"/>
    <property type="match status" value="1"/>
</dbReference>
<dbReference type="PROSITE" id="PS51449">
    <property type="entry name" value="MTTASE_N"/>
    <property type="match status" value="1"/>
</dbReference>
<dbReference type="PROSITE" id="PS01278">
    <property type="entry name" value="MTTASE_RADICAL"/>
    <property type="match status" value="1"/>
</dbReference>
<dbReference type="PROSITE" id="PS51918">
    <property type="entry name" value="RADICAL_SAM"/>
    <property type="match status" value="1"/>
</dbReference>
<dbReference type="PROSITE" id="PS50926">
    <property type="entry name" value="TRAM"/>
    <property type="match status" value="1"/>
</dbReference>
<name>MIAB_METRJ</name>
<comment type="function">
    <text evidence="1">Catalyzes the methylthiolation of N6-(dimethylallyl)adenosine (i(6)A), leading to the formation of 2-methylthio-N6-(dimethylallyl)adenosine (ms(2)i(6)A) at position 37 in tRNAs that read codons beginning with uridine.</text>
</comment>
<comment type="catalytic activity">
    <reaction evidence="1">
        <text>N(6)-dimethylallyladenosine(37) in tRNA + (sulfur carrier)-SH + AH2 + 2 S-adenosyl-L-methionine = 2-methylsulfanyl-N(6)-dimethylallyladenosine(37) in tRNA + (sulfur carrier)-H + 5'-deoxyadenosine + L-methionine + A + S-adenosyl-L-homocysteine + 2 H(+)</text>
        <dbReference type="Rhea" id="RHEA:37067"/>
        <dbReference type="Rhea" id="RHEA-COMP:10375"/>
        <dbReference type="Rhea" id="RHEA-COMP:10376"/>
        <dbReference type="Rhea" id="RHEA-COMP:14737"/>
        <dbReference type="Rhea" id="RHEA-COMP:14739"/>
        <dbReference type="ChEBI" id="CHEBI:13193"/>
        <dbReference type="ChEBI" id="CHEBI:15378"/>
        <dbReference type="ChEBI" id="CHEBI:17319"/>
        <dbReference type="ChEBI" id="CHEBI:17499"/>
        <dbReference type="ChEBI" id="CHEBI:29917"/>
        <dbReference type="ChEBI" id="CHEBI:57844"/>
        <dbReference type="ChEBI" id="CHEBI:57856"/>
        <dbReference type="ChEBI" id="CHEBI:59789"/>
        <dbReference type="ChEBI" id="CHEBI:64428"/>
        <dbReference type="ChEBI" id="CHEBI:74415"/>
        <dbReference type="ChEBI" id="CHEBI:74417"/>
        <dbReference type="EC" id="2.8.4.3"/>
    </reaction>
</comment>
<comment type="cofactor">
    <cofactor evidence="1">
        <name>[4Fe-4S] cluster</name>
        <dbReference type="ChEBI" id="CHEBI:49883"/>
    </cofactor>
    <text evidence="1">Binds 2 [4Fe-4S] clusters. One cluster is coordinated with 3 cysteines and an exchangeable S-adenosyl-L-methionine.</text>
</comment>
<comment type="subunit">
    <text evidence="1">Monomer.</text>
</comment>
<comment type="subcellular location">
    <subcellularLocation>
        <location evidence="1">Cytoplasm</location>
    </subcellularLocation>
</comment>
<comment type="similarity">
    <text evidence="1">Belongs to the methylthiotransferase family. MiaB subfamily.</text>
</comment>
<feature type="chain" id="PRO_0000374379" description="tRNA-2-methylthio-N(6)-dimethylallyladenosine synthase">
    <location>
        <begin position="1"/>
        <end position="445"/>
    </location>
</feature>
<feature type="domain" description="MTTase N-terminal" evidence="1">
    <location>
        <begin position="2"/>
        <end position="122"/>
    </location>
</feature>
<feature type="domain" description="Radical SAM core" evidence="2">
    <location>
        <begin position="143"/>
        <end position="378"/>
    </location>
</feature>
<feature type="domain" description="TRAM" evidence="1">
    <location>
        <begin position="378"/>
        <end position="440"/>
    </location>
</feature>
<feature type="binding site" evidence="1">
    <location>
        <position position="11"/>
    </location>
    <ligand>
        <name>[4Fe-4S] cluster</name>
        <dbReference type="ChEBI" id="CHEBI:49883"/>
        <label>1</label>
    </ligand>
</feature>
<feature type="binding site" evidence="1">
    <location>
        <position position="47"/>
    </location>
    <ligand>
        <name>[4Fe-4S] cluster</name>
        <dbReference type="ChEBI" id="CHEBI:49883"/>
        <label>1</label>
    </ligand>
</feature>
<feature type="binding site" evidence="1">
    <location>
        <position position="85"/>
    </location>
    <ligand>
        <name>[4Fe-4S] cluster</name>
        <dbReference type="ChEBI" id="CHEBI:49883"/>
        <label>1</label>
    </ligand>
</feature>
<feature type="binding site" evidence="1">
    <location>
        <position position="157"/>
    </location>
    <ligand>
        <name>[4Fe-4S] cluster</name>
        <dbReference type="ChEBI" id="CHEBI:49883"/>
        <label>2</label>
        <note>4Fe-4S-S-AdoMet</note>
    </ligand>
</feature>
<feature type="binding site" evidence="1">
    <location>
        <position position="161"/>
    </location>
    <ligand>
        <name>[4Fe-4S] cluster</name>
        <dbReference type="ChEBI" id="CHEBI:49883"/>
        <label>2</label>
        <note>4Fe-4S-S-AdoMet</note>
    </ligand>
</feature>
<feature type="binding site" evidence="1">
    <location>
        <position position="164"/>
    </location>
    <ligand>
        <name>[4Fe-4S] cluster</name>
        <dbReference type="ChEBI" id="CHEBI:49883"/>
        <label>2</label>
        <note>4Fe-4S-S-AdoMet</note>
    </ligand>
</feature>
<sequence>MKKAFVKSYGCQMNAYDAARMADVLGAEGYTATDTVEDADVVVLNTCHIREKAAEKVYSELGRLRVLKGERKAQGLDTRIVVAGCVAQAEGAEIQARQPAVDVVVGPQSYHRLPDLLARSRERRVVDTEFPVEDKFDHLPRRRTLGASAFLTVQEGCDKFCAFCVVPYTRGAEVSRSVAAVLAEAEKLADGGVREITLIGQNVNAYHGDGPDGAPAGLADLVRAVAKIPGIARIRYTTSHPNDFDDALIRAHAEVPALMPYLHLPVQSGSDRILAAMNRKHTGDAYRRLIDRIRAARPDIALSSDFIVGFPGETDADFAETLRLVRDVGFESAFSFKYSTRPGTPAADRTDQVPEAVMAARLAELQALLDSQRHAYQRAAAGRVFDVLVEKRGRHPGQVAGKTPHLLAVQFDAAPHHIGQVVPVRITEAGSNSLFGELVSEAAAA</sequence>
<proteinExistence type="inferred from homology"/>
<accession>B1LWE8</accession>
<reference key="1">
    <citation type="submission" date="2008-03" db="EMBL/GenBank/DDBJ databases">
        <title>Complete sequence of chromosome of Methylobacterium radiotolerans JCM 2831.</title>
        <authorList>
            <consortium name="US DOE Joint Genome Institute"/>
            <person name="Copeland A."/>
            <person name="Lucas S."/>
            <person name="Lapidus A."/>
            <person name="Glavina del Rio T."/>
            <person name="Dalin E."/>
            <person name="Tice H."/>
            <person name="Bruce D."/>
            <person name="Goodwin L."/>
            <person name="Pitluck S."/>
            <person name="Kiss H."/>
            <person name="Brettin T."/>
            <person name="Detter J.C."/>
            <person name="Han C."/>
            <person name="Kuske C.R."/>
            <person name="Schmutz J."/>
            <person name="Larimer F."/>
            <person name="Land M."/>
            <person name="Hauser L."/>
            <person name="Kyrpides N."/>
            <person name="Mikhailova N."/>
            <person name="Marx C.J."/>
            <person name="Richardson P."/>
        </authorList>
    </citation>
    <scope>NUCLEOTIDE SEQUENCE [LARGE SCALE GENOMIC DNA]</scope>
    <source>
        <strain>ATCC 27329 / DSM 1819 / JCM 2831 / NBRC 15690 / NCIMB 10815 / 0-1</strain>
    </source>
</reference>
<organism>
    <name type="scientific">Methylobacterium radiotolerans (strain ATCC 27329 / DSM 1819 / JCM 2831 / NBRC 15690 / NCIMB 10815 / 0-1)</name>
    <dbReference type="NCBI Taxonomy" id="426355"/>
    <lineage>
        <taxon>Bacteria</taxon>
        <taxon>Pseudomonadati</taxon>
        <taxon>Pseudomonadota</taxon>
        <taxon>Alphaproteobacteria</taxon>
        <taxon>Hyphomicrobiales</taxon>
        <taxon>Methylobacteriaceae</taxon>
        <taxon>Methylobacterium</taxon>
    </lineage>
</organism>
<gene>
    <name evidence="1" type="primary">miaB</name>
    <name type="ordered locus">Mrad2831_0639</name>
</gene>
<evidence type="ECO:0000255" key="1">
    <source>
        <dbReference type="HAMAP-Rule" id="MF_01864"/>
    </source>
</evidence>
<evidence type="ECO:0000255" key="2">
    <source>
        <dbReference type="PROSITE-ProRule" id="PRU01266"/>
    </source>
</evidence>
<protein>
    <recommendedName>
        <fullName evidence="1">tRNA-2-methylthio-N(6)-dimethylallyladenosine synthase</fullName>
        <ecNumber evidence="1">2.8.4.3</ecNumber>
    </recommendedName>
    <alternativeName>
        <fullName evidence="1">(Dimethylallyl)adenosine tRNA methylthiotransferase MiaB</fullName>
    </alternativeName>
    <alternativeName>
        <fullName evidence="1">tRNA-i(6)A37 methylthiotransferase</fullName>
    </alternativeName>
</protein>